<keyword id="KW-0002">3D-structure</keyword>
<keyword id="KW-0963">Cytoplasm</keyword>
<keyword id="KW-0903">Direct protein sequencing</keyword>
<keyword id="KW-0342">GTP-binding</keyword>
<keyword id="KW-0396">Initiation factor</keyword>
<keyword id="KW-0547">Nucleotide-binding</keyword>
<keyword id="KW-0648">Protein biosynthesis</keyword>
<dbReference type="EMBL" id="X04399">
    <property type="protein sequence ID" value="CAA27987.1"/>
    <property type="molecule type" value="Genomic_DNA"/>
</dbReference>
<dbReference type="PIR" id="A27892">
    <property type="entry name" value="A27892"/>
</dbReference>
<dbReference type="PDB" id="1D1N">
    <property type="method" value="NMR"/>
    <property type="chains" value="A=643-741"/>
</dbReference>
<dbReference type="PDB" id="1Z9B">
    <property type="method" value="NMR"/>
    <property type="chains" value="A=515-635"/>
</dbReference>
<dbReference type="PDB" id="2LKC">
    <property type="method" value="NMR"/>
    <property type="chains" value="A=241-414"/>
</dbReference>
<dbReference type="PDB" id="2LKD">
    <property type="method" value="NMR"/>
    <property type="chains" value="A=241-414"/>
</dbReference>
<dbReference type="PDB" id="2NBG">
    <property type="method" value="NMR"/>
    <property type="chains" value="A=394-514"/>
</dbReference>
<dbReference type="PDBsum" id="1D1N"/>
<dbReference type="PDBsum" id="1Z9B"/>
<dbReference type="PDBsum" id="2LKC"/>
<dbReference type="PDBsum" id="2LKD"/>
<dbReference type="PDBsum" id="2NBG"/>
<dbReference type="BMRB" id="P04766"/>
<dbReference type="SMR" id="P04766"/>
<dbReference type="EvolutionaryTrace" id="P04766"/>
<dbReference type="GO" id="GO:0005829">
    <property type="term" value="C:cytosol"/>
    <property type="evidence" value="ECO:0007669"/>
    <property type="project" value="TreeGrafter"/>
</dbReference>
<dbReference type="GO" id="GO:0005525">
    <property type="term" value="F:GTP binding"/>
    <property type="evidence" value="ECO:0007669"/>
    <property type="project" value="UniProtKB-KW"/>
</dbReference>
<dbReference type="GO" id="GO:0003924">
    <property type="term" value="F:GTPase activity"/>
    <property type="evidence" value="ECO:0007669"/>
    <property type="project" value="UniProtKB-UniRule"/>
</dbReference>
<dbReference type="GO" id="GO:0003743">
    <property type="term" value="F:translation initiation factor activity"/>
    <property type="evidence" value="ECO:0007669"/>
    <property type="project" value="UniProtKB-UniRule"/>
</dbReference>
<dbReference type="CDD" id="cd01887">
    <property type="entry name" value="IF2_eIF5B"/>
    <property type="match status" value="1"/>
</dbReference>
<dbReference type="CDD" id="cd03702">
    <property type="entry name" value="IF2_mtIF2_II"/>
    <property type="match status" value="1"/>
</dbReference>
<dbReference type="CDD" id="cd03692">
    <property type="entry name" value="mtIF2_IVc"/>
    <property type="match status" value="1"/>
</dbReference>
<dbReference type="FunFam" id="2.40.30.10:FF:000007">
    <property type="entry name" value="Translation initiation factor IF-2"/>
    <property type="match status" value="1"/>
</dbReference>
<dbReference type="FunFam" id="2.40.30.10:FF:000008">
    <property type="entry name" value="Translation initiation factor IF-2"/>
    <property type="match status" value="1"/>
</dbReference>
<dbReference type="FunFam" id="3.40.50.10050:FF:000001">
    <property type="entry name" value="Translation initiation factor IF-2"/>
    <property type="match status" value="1"/>
</dbReference>
<dbReference type="FunFam" id="3.40.50.300:FF:000019">
    <property type="entry name" value="Translation initiation factor IF-2"/>
    <property type="match status" value="1"/>
</dbReference>
<dbReference type="Gene3D" id="1.10.10.2480">
    <property type="match status" value="1"/>
</dbReference>
<dbReference type="Gene3D" id="3.40.50.300">
    <property type="entry name" value="P-loop containing nucleotide triphosphate hydrolases"/>
    <property type="match status" value="1"/>
</dbReference>
<dbReference type="Gene3D" id="2.40.30.10">
    <property type="entry name" value="Translation factors"/>
    <property type="match status" value="2"/>
</dbReference>
<dbReference type="Gene3D" id="3.40.50.10050">
    <property type="entry name" value="Translation initiation factor IF- 2, domain 3"/>
    <property type="match status" value="1"/>
</dbReference>
<dbReference type="HAMAP" id="MF_00100_B">
    <property type="entry name" value="IF_2_B"/>
    <property type="match status" value="1"/>
</dbReference>
<dbReference type="InterPro" id="IPR053905">
    <property type="entry name" value="EF-G-like_DII"/>
</dbReference>
<dbReference type="InterPro" id="IPR004161">
    <property type="entry name" value="EFTu-like_2"/>
</dbReference>
<dbReference type="InterPro" id="IPR044145">
    <property type="entry name" value="IF2_II"/>
</dbReference>
<dbReference type="InterPro" id="IPR006847">
    <property type="entry name" value="IF2_N"/>
</dbReference>
<dbReference type="InterPro" id="IPR027417">
    <property type="entry name" value="P-loop_NTPase"/>
</dbReference>
<dbReference type="InterPro" id="IPR005225">
    <property type="entry name" value="Small_GTP-bd"/>
</dbReference>
<dbReference type="InterPro" id="IPR000795">
    <property type="entry name" value="T_Tr_GTP-bd_dom"/>
</dbReference>
<dbReference type="InterPro" id="IPR000178">
    <property type="entry name" value="TF_IF2_bacterial-like"/>
</dbReference>
<dbReference type="InterPro" id="IPR015760">
    <property type="entry name" value="TIF_IF2"/>
</dbReference>
<dbReference type="InterPro" id="IPR023115">
    <property type="entry name" value="TIF_IF2_dom3"/>
</dbReference>
<dbReference type="InterPro" id="IPR036925">
    <property type="entry name" value="TIF_IF2_dom3_sf"/>
</dbReference>
<dbReference type="InterPro" id="IPR009000">
    <property type="entry name" value="Transl_B-barrel_sf"/>
</dbReference>
<dbReference type="NCBIfam" id="TIGR00487">
    <property type="entry name" value="IF-2"/>
    <property type="match status" value="1"/>
</dbReference>
<dbReference type="NCBIfam" id="TIGR00231">
    <property type="entry name" value="small_GTP"/>
    <property type="match status" value="1"/>
</dbReference>
<dbReference type="PANTHER" id="PTHR43381:SF5">
    <property type="entry name" value="TR-TYPE G DOMAIN-CONTAINING PROTEIN"/>
    <property type="match status" value="1"/>
</dbReference>
<dbReference type="PANTHER" id="PTHR43381">
    <property type="entry name" value="TRANSLATION INITIATION FACTOR IF-2-RELATED"/>
    <property type="match status" value="1"/>
</dbReference>
<dbReference type="Pfam" id="PF22042">
    <property type="entry name" value="EF-G_D2"/>
    <property type="match status" value="1"/>
</dbReference>
<dbReference type="Pfam" id="PF00009">
    <property type="entry name" value="GTP_EFTU"/>
    <property type="match status" value="1"/>
</dbReference>
<dbReference type="Pfam" id="PF03144">
    <property type="entry name" value="GTP_EFTU_D2"/>
    <property type="match status" value="1"/>
</dbReference>
<dbReference type="Pfam" id="PF11987">
    <property type="entry name" value="IF-2"/>
    <property type="match status" value="1"/>
</dbReference>
<dbReference type="Pfam" id="PF04760">
    <property type="entry name" value="IF2_N"/>
    <property type="match status" value="2"/>
</dbReference>
<dbReference type="SUPFAM" id="SSF52156">
    <property type="entry name" value="Initiation factor IF2/eIF5b, domain 3"/>
    <property type="match status" value="1"/>
</dbReference>
<dbReference type="SUPFAM" id="SSF52540">
    <property type="entry name" value="P-loop containing nucleoside triphosphate hydrolases"/>
    <property type="match status" value="1"/>
</dbReference>
<dbReference type="SUPFAM" id="SSF50447">
    <property type="entry name" value="Translation proteins"/>
    <property type="match status" value="2"/>
</dbReference>
<dbReference type="PROSITE" id="PS51722">
    <property type="entry name" value="G_TR_2"/>
    <property type="match status" value="1"/>
</dbReference>
<dbReference type="PROSITE" id="PS01176">
    <property type="entry name" value="IF2"/>
    <property type="match status" value="1"/>
</dbReference>
<gene>
    <name type="primary">infB</name>
</gene>
<protein>
    <recommendedName>
        <fullName>Translation initiation factor IF-2</fullName>
    </recommendedName>
</protein>
<name>IF2_GEOSE</name>
<evidence type="ECO:0000250" key="1"/>
<evidence type="ECO:0000256" key="2">
    <source>
        <dbReference type="SAM" id="MobiDB-lite"/>
    </source>
</evidence>
<evidence type="ECO:0000305" key="3"/>
<evidence type="ECO:0007829" key="4">
    <source>
        <dbReference type="PDB" id="1D1N"/>
    </source>
</evidence>
<evidence type="ECO:0007829" key="5">
    <source>
        <dbReference type="PDB" id="1Z9B"/>
    </source>
</evidence>
<evidence type="ECO:0007829" key="6">
    <source>
        <dbReference type="PDB" id="2LKC"/>
    </source>
</evidence>
<evidence type="ECO:0007829" key="7">
    <source>
        <dbReference type="PDB" id="2LKD"/>
    </source>
</evidence>
<evidence type="ECO:0007829" key="8">
    <source>
        <dbReference type="PDB" id="2NBG"/>
    </source>
</evidence>
<reference key="1">
    <citation type="journal article" date="1986" name="Mol. Gen. Genet.">
        <title>Molecular cloning and sequence of the Bacillus stearothermophilus translational initiation factor IF2 gene.</title>
        <authorList>
            <person name="Brombach M."/>
            <person name="Gualerzi C.O."/>
            <person name="Nakamura Y."/>
            <person name="Pon C.L."/>
        </authorList>
    </citation>
    <scope>NUCLEOTIDE SEQUENCE [GENOMIC DNA]</scope>
</reference>
<reference key="2">
    <citation type="journal article" date="1990" name="FEBS Lett.">
        <title>Proteolysis of Bacillus stearothermophilus IF2 and specific protection by GTP.</title>
        <authorList>
            <person name="Severini M."/>
            <person name="Choli T."/>
            <person name="La Teana A."/>
            <person name="Gualerzi C.O."/>
        </authorList>
    </citation>
    <scope>PROTEIN SEQUENCE OF 4-13; 19-25; 27-30; 147-165; 309-321 AND 520-532</scope>
</reference>
<accession>P04766</accession>
<proteinExistence type="evidence at protein level"/>
<sequence>MSKMRVYEYAKKQNVPSKDVIHKLKEMNIEVNNHMAMLEADVVEKLDHQYRPKAEKKTETKNEKKAEKKTDKPKRPMPAKTADFSDEEIFDDVKEAAKPAKKKGAAKGKETKRTEAQQQEKKAFQAAKKKGKGPAKGKKQAAPAAKQVPQPAKKEKELPKKITFEGSLTVAELAKKLGREPSEIIKKLFMLGVMATINQDLDKDAIELICSDYGVEVEEKVTIDETNFEAIEIADAPEDLVERPPVVTIMGHVDHGKTTLLDAIRHSKVTEQEAGGITQHIGAYQVTVNDKKITFLDTPGHEAFTTMRARGRQVTDIVILVVAADDGVMPQTVEAINHAKAANVPIIVAINKMDKPEANPDRVMQELMEYNLVPEEWGGDTIFCKLSAKTKEGLDHLLEMILLVSEMEELKANPNRRAVGTVIEAKLDKGRGPVATLLVQAGTLKVGDPIVVGTTYGRVRAMVNDSGRRVKEAGPSMPVEITGLHDVPQAGDRFMVFEDEKKARQIGEARAQRQLQEQRSVKTRVSLDDLFEQIKQGEMKELNLIVKADVQGSVEALVAALQKIDVEGVRVKIIHAAVGAITESDISLATASNAIVIGFNVRPDANAKRAAESEKVDIRLHRIIYNVIEEIEAAMKGMLDPEYEEKVIGQAEVRQTFKVSKVGTIAGCYVTDGKITRDSKVRLIRQGIVVYEGEIDSLKRYKDDVREVAQGYECGLTIKNFNDIKEGDVIEAYVMQEVARA</sequence>
<feature type="chain" id="PRO_0000137170" description="Translation initiation factor IF-2">
    <location>
        <begin position="1"/>
        <end position="741"/>
    </location>
</feature>
<feature type="domain" description="tr-type G">
    <location>
        <begin position="242"/>
        <end position="411"/>
    </location>
</feature>
<feature type="region of interest" description="Disordered" evidence="2">
    <location>
        <begin position="48"/>
        <end position="158"/>
    </location>
</feature>
<feature type="region of interest" description="G1" evidence="1">
    <location>
        <begin position="251"/>
        <end position="258"/>
    </location>
</feature>
<feature type="region of interest" description="G2" evidence="1">
    <location>
        <begin position="276"/>
        <end position="280"/>
    </location>
</feature>
<feature type="region of interest" description="G3" evidence="1">
    <location>
        <begin position="297"/>
        <end position="300"/>
    </location>
</feature>
<feature type="region of interest" description="G4" evidence="1">
    <location>
        <begin position="351"/>
        <end position="354"/>
    </location>
</feature>
<feature type="region of interest" description="G5" evidence="1">
    <location>
        <begin position="387"/>
        <end position="389"/>
    </location>
</feature>
<feature type="compositionally biased region" description="Basic and acidic residues" evidence="2">
    <location>
        <begin position="48"/>
        <end position="74"/>
    </location>
</feature>
<feature type="compositionally biased region" description="Basic and acidic residues" evidence="2">
    <location>
        <begin position="107"/>
        <end position="123"/>
    </location>
</feature>
<feature type="compositionally biased region" description="Basic residues" evidence="2">
    <location>
        <begin position="127"/>
        <end position="139"/>
    </location>
</feature>
<feature type="compositionally biased region" description="Low complexity" evidence="2">
    <location>
        <begin position="140"/>
        <end position="151"/>
    </location>
</feature>
<feature type="binding site" evidence="1">
    <location>
        <begin position="251"/>
        <end position="258"/>
    </location>
    <ligand>
        <name>GTP</name>
        <dbReference type="ChEBI" id="CHEBI:37565"/>
    </ligand>
</feature>
<feature type="binding site" evidence="1">
    <location>
        <begin position="297"/>
        <end position="301"/>
    </location>
    <ligand>
        <name>GTP</name>
        <dbReference type="ChEBI" id="CHEBI:37565"/>
    </ligand>
</feature>
<feature type="binding site" evidence="1">
    <location>
        <begin position="351"/>
        <end position="354"/>
    </location>
    <ligand>
        <name>GTP</name>
        <dbReference type="ChEBI" id="CHEBI:37565"/>
    </ligand>
</feature>
<feature type="sequence conflict" description="In Ref. 2; AA sequence." evidence="3" ref="2">
    <original>R</original>
    <variation>A</variation>
    <location>
        <position position="312"/>
    </location>
</feature>
<feature type="strand" evidence="6">
    <location>
        <begin position="246"/>
        <end position="251"/>
    </location>
</feature>
<feature type="turn" evidence="6">
    <location>
        <begin position="253"/>
        <end position="256"/>
    </location>
</feature>
<feature type="helix" evidence="6">
    <location>
        <begin position="257"/>
        <end position="265"/>
    </location>
</feature>
<feature type="strand" evidence="7">
    <location>
        <begin position="271"/>
        <end position="274"/>
    </location>
</feature>
<feature type="strand" evidence="6">
    <location>
        <begin position="276"/>
        <end position="278"/>
    </location>
</feature>
<feature type="strand" evidence="6">
    <location>
        <begin position="285"/>
        <end position="288"/>
    </location>
</feature>
<feature type="strand" evidence="6">
    <location>
        <begin position="291"/>
        <end position="296"/>
    </location>
</feature>
<feature type="strand" evidence="6">
    <location>
        <begin position="300"/>
        <end position="305"/>
    </location>
</feature>
<feature type="strand" evidence="7">
    <location>
        <begin position="308"/>
        <end position="310"/>
    </location>
</feature>
<feature type="strand" evidence="6">
    <location>
        <begin position="317"/>
        <end position="323"/>
    </location>
</feature>
<feature type="turn" evidence="7">
    <location>
        <begin position="324"/>
        <end position="326"/>
    </location>
</feature>
<feature type="helix" evidence="6">
    <location>
        <begin position="330"/>
        <end position="339"/>
    </location>
</feature>
<feature type="helix" evidence="6">
    <location>
        <begin position="340"/>
        <end position="342"/>
    </location>
</feature>
<feature type="strand" evidence="6">
    <location>
        <begin position="346"/>
        <end position="351"/>
    </location>
</feature>
<feature type="turn" evidence="6">
    <location>
        <begin position="352"/>
        <end position="354"/>
    </location>
</feature>
<feature type="helix" evidence="6">
    <location>
        <begin position="360"/>
        <end position="367"/>
    </location>
</feature>
<feature type="turn" evidence="6">
    <location>
        <begin position="368"/>
        <end position="371"/>
    </location>
</feature>
<feature type="turn" evidence="6">
    <location>
        <begin position="375"/>
        <end position="378"/>
    </location>
</feature>
<feature type="strand" evidence="6">
    <location>
        <begin position="379"/>
        <end position="385"/>
    </location>
</feature>
<feature type="strand" evidence="6">
    <location>
        <begin position="388"/>
        <end position="391"/>
    </location>
</feature>
<feature type="helix" evidence="6">
    <location>
        <begin position="392"/>
        <end position="407"/>
    </location>
</feature>
<feature type="turn" evidence="6">
    <location>
        <begin position="408"/>
        <end position="411"/>
    </location>
</feature>
<feature type="strand" evidence="8">
    <location>
        <begin position="414"/>
        <end position="418"/>
    </location>
</feature>
<feature type="strand" evidence="8">
    <location>
        <begin position="420"/>
        <end position="428"/>
    </location>
</feature>
<feature type="turn" evidence="8">
    <location>
        <begin position="429"/>
        <end position="431"/>
    </location>
</feature>
<feature type="strand" evidence="8">
    <location>
        <begin position="432"/>
        <end position="438"/>
    </location>
</feature>
<feature type="strand" evidence="8">
    <location>
        <begin position="449"/>
        <end position="452"/>
    </location>
</feature>
<feature type="strand" evidence="8">
    <location>
        <begin position="455"/>
        <end position="458"/>
    </location>
</feature>
<feature type="strand" evidence="8">
    <location>
        <begin position="462"/>
        <end position="464"/>
    </location>
</feature>
<feature type="strand" evidence="8">
    <location>
        <begin position="469"/>
        <end position="473"/>
    </location>
</feature>
<feature type="strand" evidence="8">
    <location>
        <begin position="478"/>
        <end position="482"/>
    </location>
</feature>
<feature type="strand" evidence="8">
    <location>
        <begin position="493"/>
        <end position="495"/>
    </location>
</feature>
<feature type="helix" evidence="8">
    <location>
        <begin position="500"/>
        <end position="506"/>
    </location>
</feature>
<feature type="strand" evidence="8">
    <location>
        <begin position="508"/>
        <end position="511"/>
    </location>
</feature>
<feature type="strand" evidence="5">
    <location>
        <begin position="541"/>
        <end position="550"/>
    </location>
</feature>
<feature type="helix" evidence="5">
    <location>
        <begin position="551"/>
        <end position="561"/>
    </location>
</feature>
<feature type="strand" evidence="5">
    <location>
        <begin position="570"/>
        <end position="579"/>
    </location>
</feature>
<feature type="helix" evidence="5">
    <location>
        <begin position="583"/>
        <end position="592"/>
    </location>
</feature>
<feature type="strand" evidence="5">
    <location>
        <begin position="595"/>
        <end position="600"/>
    </location>
</feature>
<feature type="helix" evidence="5">
    <location>
        <begin position="607"/>
        <end position="612"/>
    </location>
</feature>
<feature type="turn" evidence="5">
    <location>
        <begin position="613"/>
        <end position="615"/>
    </location>
</feature>
<feature type="strand" evidence="4">
    <location>
        <begin position="647"/>
        <end position="653"/>
    </location>
</feature>
<feature type="strand" evidence="4">
    <location>
        <begin position="660"/>
        <end position="662"/>
    </location>
</feature>
<feature type="strand" evidence="4">
    <location>
        <begin position="666"/>
        <end position="670"/>
    </location>
</feature>
<feature type="strand" evidence="4">
    <location>
        <begin position="672"/>
        <end position="674"/>
    </location>
</feature>
<feature type="strand" evidence="4">
    <location>
        <begin position="677"/>
        <end position="684"/>
    </location>
</feature>
<feature type="strand" evidence="4">
    <location>
        <begin position="686"/>
        <end position="694"/>
    </location>
</feature>
<feature type="strand" evidence="4">
    <location>
        <begin position="696"/>
        <end position="699"/>
    </location>
</feature>
<feature type="strand" evidence="4">
    <location>
        <begin position="701"/>
        <end position="703"/>
    </location>
</feature>
<feature type="strand" evidence="4">
    <location>
        <begin position="713"/>
        <end position="717"/>
    </location>
</feature>
<feature type="strand" evidence="4">
    <location>
        <begin position="728"/>
        <end position="733"/>
    </location>
</feature>
<organism>
    <name type="scientific">Geobacillus stearothermophilus</name>
    <name type="common">Bacillus stearothermophilus</name>
    <dbReference type="NCBI Taxonomy" id="1422"/>
    <lineage>
        <taxon>Bacteria</taxon>
        <taxon>Bacillati</taxon>
        <taxon>Bacillota</taxon>
        <taxon>Bacilli</taxon>
        <taxon>Bacillales</taxon>
        <taxon>Anoxybacillaceae</taxon>
        <taxon>Geobacillus</taxon>
    </lineage>
</organism>
<comment type="function">
    <text>One of the essential components for the initiation of protein synthesis. Protects formylmethionyl-tRNA from spontaneous hydrolysis and promotes its binding to the 30S ribosomal subunits. Also involved in the hydrolysis of GTP during the formation of the 70S ribosomal complex.</text>
</comment>
<comment type="subcellular location">
    <subcellularLocation>
        <location>Cytoplasm</location>
    </subcellularLocation>
</comment>
<comment type="similarity">
    <text evidence="3">Belongs to the TRAFAC class translation factor GTPase superfamily. Classic translation factor GTPase family. IF-2 subfamily.</text>
</comment>